<proteinExistence type="evidence at protein level"/>
<keyword id="KW-0025">Alternative splicing</keyword>
<keyword id="KW-0256">Endoplasmic reticulum</keyword>
<keyword id="KW-0472">Membrane</keyword>
<keyword id="KW-1185">Reference proteome</keyword>
<keyword id="KW-0812">Transmembrane</keyword>
<keyword id="KW-1133">Transmembrane helix</keyword>
<evidence type="ECO:0000250" key="1">
    <source>
        <dbReference type="UniProtKB" id="Q96Q80"/>
    </source>
</evidence>
<evidence type="ECO:0000255" key="2"/>
<evidence type="ECO:0000269" key="3">
    <source>
    </source>
</evidence>
<evidence type="ECO:0000269" key="4">
    <source>
    </source>
</evidence>
<evidence type="ECO:0000303" key="5">
    <source>
    </source>
</evidence>
<evidence type="ECO:0000303" key="6">
    <source>
    </source>
</evidence>
<evidence type="ECO:0000303" key="7">
    <source>
    </source>
</evidence>
<evidence type="ECO:0000305" key="8"/>
<evidence type="ECO:0000312" key="9">
    <source>
        <dbReference type="MGI" id="MGI:1917627"/>
    </source>
</evidence>
<gene>
    <name evidence="9" type="primary">Derl3</name>
    <name type="synonym">Der3</name>
    <name evidence="5" type="synonym">Izp6</name>
</gene>
<accession>Q9D8K3</accession>
<accession>Q3T9L7</accession>
<accession>Q99KC6</accession>
<accession>Q9D954</accession>
<sequence length="228" mass="25978">MAGQRLAAGFLQVPAVTRAYTAACVLTTAAVQLELLSPFQLYFNPHLVFRKFQVWRLITTFLFFGPLGFGFFFNMLFVFRYCRMLEEGSFRGRKADFVFMFLFGGVLMTLLGFLGSLFFLGQALMAMLVYVWSRRSPHVRVNFFGLLNFQAPFLPWALMGFSLLLGNSVVTDLLGILVGHIYYFLEDVFPNQPGGKRLLLTPSVLKLLLDDPQEDPDYLPLPEEQPEL</sequence>
<protein>
    <recommendedName>
        <fullName evidence="6">Derlin-3</fullName>
    </recommendedName>
    <alternativeName>
        <fullName>Degradation in endoplasmic reticulum protein 3</fullName>
    </alternativeName>
    <alternativeName>
        <fullName evidence="6">Der1-like protein 3</fullName>
    </alternativeName>
    <alternativeName>
        <fullName evidence="5">Protein IZP6</fullName>
    </alternativeName>
</protein>
<dbReference type="EMBL" id="AB047555">
    <property type="protein sequence ID" value="BAB32788.1"/>
    <property type="molecule type" value="mRNA"/>
</dbReference>
<dbReference type="EMBL" id="AK007348">
    <property type="protein sequence ID" value="BAB24977.1"/>
    <property type="molecule type" value="mRNA"/>
</dbReference>
<dbReference type="EMBL" id="AK007948">
    <property type="protein sequence ID" value="BAB25367.1"/>
    <property type="molecule type" value="mRNA"/>
</dbReference>
<dbReference type="EMBL" id="AK172429">
    <property type="protein sequence ID" value="BAE43003.1"/>
    <property type="molecule type" value="mRNA"/>
</dbReference>
<dbReference type="EMBL" id="BC004729">
    <property type="protein sequence ID" value="AAH04729.1"/>
    <property type="status" value="ALT_INIT"/>
    <property type="molecule type" value="mRNA"/>
</dbReference>
<dbReference type="CCDS" id="CCDS23935.1">
    <molecule id="Q9D8K3-1"/>
</dbReference>
<dbReference type="RefSeq" id="NP_001345914.1">
    <molecule id="Q9D8K3-2"/>
    <property type="nucleotide sequence ID" value="NM_001358985.1"/>
</dbReference>
<dbReference type="RefSeq" id="NP_077760.1">
    <molecule id="Q9D8K3-1"/>
    <property type="nucleotide sequence ID" value="NM_024440.2"/>
</dbReference>
<dbReference type="SMR" id="Q9D8K3"/>
<dbReference type="FunCoup" id="Q9D8K3">
    <property type="interactions" value="491"/>
</dbReference>
<dbReference type="STRING" id="10090.ENSMUSP00000009236"/>
<dbReference type="GlyGen" id="Q9D8K3">
    <property type="glycosylation" value="1 site"/>
</dbReference>
<dbReference type="PaxDb" id="10090-ENSMUSP00000009236"/>
<dbReference type="ProteomicsDB" id="279402">
    <molecule id="Q9D8K3-1"/>
</dbReference>
<dbReference type="ProteomicsDB" id="279403">
    <molecule id="Q9D8K3-2"/>
</dbReference>
<dbReference type="Antibodypedia" id="23832">
    <property type="antibodies" value="69 antibodies from 20 providers"/>
</dbReference>
<dbReference type="Ensembl" id="ENSMUST00000009236.6">
    <molecule id="Q9D8K3-1"/>
    <property type="protein sequence ID" value="ENSMUSP00000009236.5"/>
    <property type="gene ID" value="ENSMUSG00000009092.6"/>
</dbReference>
<dbReference type="GeneID" id="70377"/>
<dbReference type="KEGG" id="mmu:70377"/>
<dbReference type="UCSC" id="uc007ftj.1">
    <molecule id="Q9D8K3-1"/>
    <property type="organism name" value="mouse"/>
</dbReference>
<dbReference type="UCSC" id="uc007ftk.1">
    <molecule id="Q9D8K3-2"/>
    <property type="organism name" value="mouse"/>
</dbReference>
<dbReference type="AGR" id="MGI:1917627"/>
<dbReference type="CTD" id="91319"/>
<dbReference type="MGI" id="MGI:1917627">
    <property type="gene designation" value="Derl3"/>
</dbReference>
<dbReference type="VEuPathDB" id="HostDB:ENSMUSG00000009092"/>
<dbReference type="eggNOG" id="KOG0858">
    <property type="taxonomic scope" value="Eukaryota"/>
</dbReference>
<dbReference type="GeneTree" id="ENSGT00530000063156"/>
<dbReference type="HOGENOM" id="CLU_051898_5_2_1"/>
<dbReference type="InParanoid" id="Q9D8K3"/>
<dbReference type="OMA" id="DFVFMFF"/>
<dbReference type="OrthoDB" id="1716531at2759"/>
<dbReference type="PhylomeDB" id="Q9D8K3"/>
<dbReference type="TreeFam" id="TF314715"/>
<dbReference type="Reactome" id="R-MMU-382556">
    <property type="pathway name" value="ABC-family proteins mediated transport"/>
</dbReference>
<dbReference type="BioGRID-ORCS" id="70377">
    <property type="hits" value="5 hits in 80 CRISPR screens"/>
</dbReference>
<dbReference type="ChiTaRS" id="Derl3">
    <property type="organism name" value="mouse"/>
</dbReference>
<dbReference type="PRO" id="PR:Q9D8K3"/>
<dbReference type="Proteomes" id="UP000000589">
    <property type="component" value="Chromosome 10"/>
</dbReference>
<dbReference type="RNAct" id="Q9D8K3">
    <property type="molecule type" value="protein"/>
</dbReference>
<dbReference type="Bgee" id="ENSMUSG00000009092">
    <property type="expression patterns" value="Expressed in saliva-secreting gland and 114 other cell types or tissues"/>
</dbReference>
<dbReference type="ExpressionAtlas" id="Q9D8K3">
    <property type="expression patterns" value="baseline and differential"/>
</dbReference>
<dbReference type="GO" id="GO:0005789">
    <property type="term" value="C:endoplasmic reticulum membrane"/>
    <property type="evidence" value="ECO:0007669"/>
    <property type="project" value="UniProtKB-SubCell"/>
</dbReference>
<dbReference type="GO" id="GO:0005047">
    <property type="term" value="F:signal recognition particle binding"/>
    <property type="evidence" value="ECO:0000250"/>
    <property type="project" value="UniProtKB"/>
</dbReference>
<dbReference type="GO" id="GO:0030968">
    <property type="term" value="P:endoplasmic reticulum unfolded protein response"/>
    <property type="evidence" value="ECO:0007669"/>
    <property type="project" value="Ensembl"/>
</dbReference>
<dbReference type="GO" id="GO:0036503">
    <property type="term" value="P:ERAD pathway"/>
    <property type="evidence" value="ECO:0000250"/>
    <property type="project" value="UniProtKB"/>
</dbReference>
<dbReference type="GO" id="GO:1904153">
    <property type="term" value="P:negative regulation of retrograde protein transport, ER to cytosol"/>
    <property type="evidence" value="ECO:0007669"/>
    <property type="project" value="Ensembl"/>
</dbReference>
<dbReference type="GO" id="GO:0018279">
    <property type="term" value="P:protein N-linked glycosylation via asparagine"/>
    <property type="evidence" value="ECO:0000250"/>
    <property type="project" value="UniProtKB"/>
</dbReference>
<dbReference type="FunFam" id="1.20.1540.10:FF:000016">
    <property type="entry name" value="Derlin"/>
    <property type="match status" value="1"/>
</dbReference>
<dbReference type="Gene3D" id="1.20.1540.10">
    <property type="entry name" value="Rhomboid-like"/>
    <property type="match status" value="1"/>
</dbReference>
<dbReference type="InterPro" id="IPR007599">
    <property type="entry name" value="DER1"/>
</dbReference>
<dbReference type="InterPro" id="IPR035952">
    <property type="entry name" value="Rhomboid-like_sf"/>
</dbReference>
<dbReference type="PANTHER" id="PTHR11009">
    <property type="entry name" value="DER1-LIKE PROTEIN, DERLIN"/>
    <property type="match status" value="1"/>
</dbReference>
<dbReference type="Pfam" id="PF04511">
    <property type="entry name" value="DER1"/>
    <property type="match status" value="1"/>
</dbReference>
<dbReference type="SUPFAM" id="SSF144091">
    <property type="entry name" value="Rhomboid-like"/>
    <property type="match status" value="1"/>
</dbReference>
<name>DERL3_MOUSE</name>
<comment type="function">
    <text evidence="1">Functional component of endoplasmic reticulum-associated degradation (ERAD) for misfolded lumenal glycoproteins, but not that of misfolded nonglycoproteins. May act by forming a channel that allows the retrotranslocation of misfolded glycoproteins into the cytosol where they are ubiquitinated and degraded by the proteasome. May mediate the interaction between VCP and the misfolded glycoproteins. May be involved in endoplasmic reticulum stress-induced pre-emptive quality control, a mechanism that selectively attenuates the translocation of newly synthesized proteins into the endoplasmic reticulum and reroutes them to the cytosol for proteasomal degradation.</text>
</comment>
<comment type="subunit">
    <text evidence="1 4">Forms homo- and heterooligomers with DERL2 and, to a lesser extent, with DERL1 (By similarity). Interacts with VCP and EDEM1 (By similarity). Interacts with SELENOK and SELENOS (PubMed:22016385). Interacts with the signal recognition particle/SRP and the SRP receptor; in the process of endoplasmic reticulum stress-induced pre-emptive quality control (By similarity).</text>
</comment>
<comment type="subcellular location">
    <subcellularLocation>
        <location evidence="1">Endoplasmic reticulum membrane</location>
        <topology evidence="1">Multi-pass membrane protein</topology>
    </subcellularLocation>
</comment>
<comment type="alternative products">
    <event type="alternative splicing"/>
    <isoform>
        <id>Q9D8K3-1</id>
        <name>1</name>
        <sequence type="displayed"/>
    </isoform>
    <isoform>
        <id>Q9D8K3-2</id>
        <name>2</name>
        <sequence type="described" ref="VSP_011090"/>
    </isoform>
</comment>
<comment type="tissue specificity">
    <text evidence="3">Highly expressed in spleen, lung, liver, spleen and testis. Expressed at intermediate level in kidney. Weakly or not expressed in brain, heart and skeletal muscle.</text>
</comment>
<comment type="developmental stage">
    <text evidence="3">Expressed in neural cells during embryogenesis. From 11.5 dpc until 14.5 dpc, it is mainly expressed in the forebrain. From 15.5 dpc until birth, expression in the forebrain becomes weaker but is still observed in the olfactory bulb and the skin around the eyes, nose, limbs and tail, showing that its pattern of expression changes from the central nervous system to the peripheral tissues during development.</text>
</comment>
<comment type="similarity">
    <text evidence="8">Belongs to the derlin family.</text>
</comment>
<comment type="sequence caution" evidence="8">
    <conflict type="erroneous initiation">
        <sequence resource="EMBL-CDS" id="AAH04729"/>
    </conflict>
</comment>
<reference key="1">
    <citation type="journal article" date="2001" name="Dev. Growth Differ.">
        <title>A novel putative transmembrane protein, IZP6, is expressed in neural cells during embryogenesis.</title>
        <authorList>
            <person name="Tsukahara M."/>
            <person name="Ji Z.-S."/>
            <person name="Noguchi S."/>
            <person name="Tsunoo H."/>
        </authorList>
    </citation>
    <scope>NUCLEOTIDE SEQUENCE [MRNA] (ISOFORM 1)</scope>
    <scope>TISSUE SPECIFICITY</scope>
    <scope>DEVELOPMENTAL STAGE</scope>
    <source>
        <strain>C57BL/6J</strain>
        <tissue>CNS</tissue>
    </source>
</reference>
<reference key="2">
    <citation type="journal article" date="2005" name="Science">
        <title>The transcriptional landscape of the mammalian genome.</title>
        <authorList>
            <person name="Carninci P."/>
            <person name="Kasukawa T."/>
            <person name="Katayama S."/>
            <person name="Gough J."/>
            <person name="Frith M.C."/>
            <person name="Maeda N."/>
            <person name="Oyama R."/>
            <person name="Ravasi T."/>
            <person name="Lenhard B."/>
            <person name="Wells C."/>
            <person name="Kodzius R."/>
            <person name="Shimokawa K."/>
            <person name="Bajic V.B."/>
            <person name="Brenner S.E."/>
            <person name="Batalov S."/>
            <person name="Forrest A.R."/>
            <person name="Zavolan M."/>
            <person name="Davis M.J."/>
            <person name="Wilming L.G."/>
            <person name="Aidinis V."/>
            <person name="Allen J.E."/>
            <person name="Ambesi-Impiombato A."/>
            <person name="Apweiler R."/>
            <person name="Aturaliya R.N."/>
            <person name="Bailey T.L."/>
            <person name="Bansal M."/>
            <person name="Baxter L."/>
            <person name="Beisel K.W."/>
            <person name="Bersano T."/>
            <person name="Bono H."/>
            <person name="Chalk A.M."/>
            <person name="Chiu K.P."/>
            <person name="Choudhary V."/>
            <person name="Christoffels A."/>
            <person name="Clutterbuck D.R."/>
            <person name="Crowe M.L."/>
            <person name="Dalla E."/>
            <person name="Dalrymple B.P."/>
            <person name="de Bono B."/>
            <person name="Della Gatta G."/>
            <person name="di Bernardo D."/>
            <person name="Down T."/>
            <person name="Engstrom P."/>
            <person name="Fagiolini M."/>
            <person name="Faulkner G."/>
            <person name="Fletcher C.F."/>
            <person name="Fukushima T."/>
            <person name="Furuno M."/>
            <person name="Futaki S."/>
            <person name="Gariboldi M."/>
            <person name="Georgii-Hemming P."/>
            <person name="Gingeras T.R."/>
            <person name="Gojobori T."/>
            <person name="Green R.E."/>
            <person name="Gustincich S."/>
            <person name="Harbers M."/>
            <person name="Hayashi Y."/>
            <person name="Hensch T.K."/>
            <person name="Hirokawa N."/>
            <person name="Hill D."/>
            <person name="Huminiecki L."/>
            <person name="Iacono M."/>
            <person name="Ikeo K."/>
            <person name="Iwama A."/>
            <person name="Ishikawa T."/>
            <person name="Jakt M."/>
            <person name="Kanapin A."/>
            <person name="Katoh M."/>
            <person name="Kawasawa Y."/>
            <person name="Kelso J."/>
            <person name="Kitamura H."/>
            <person name="Kitano H."/>
            <person name="Kollias G."/>
            <person name="Krishnan S.P."/>
            <person name="Kruger A."/>
            <person name="Kummerfeld S.K."/>
            <person name="Kurochkin I.V."/>
            <person name="Lareau L.F."/>
            <person name="Lazarevic D."/>
            <person name="Lipovich L."/>
            <person name="Liu J."/>
            <person name="Liuni S."/>
            <person name="McWilliam S."/>
            <person name="Madan Babu M."/>
            <person name="Madera M."/>
            <person name="Marchionni L."/>
            <person name="Matsuda H."/>
            <person name="Matsuzawa S."/>
            <person name="Miki H."/>
            <person name="Mignone F."/>
            <person name="Miyake S."/>
            <person name="Morris K."/>
            <person name="Mottagui-Tabar S."/>
            <person name="Mulder N."/>
            <person name="Nakano N."/>
            <person name="Nakauchi H."/>
            <person name="Ng P."/>
            <person name="Nilsson R."/>
            <person name="Nishiguchi S."/>
            <person name="Nishikawa S."/>
            <person name="Nori F."/>
            <person name="Ohara O."/>
            <person name="Okazaki Y."/>
            <person name="Orlando V."/>
            <person name="Pang K.C."/>
            <person name="Pavan W.J."/>
            <person name="Pavesi G."/>
            <person name="Pesole G."/>
            <person name="Petrovsky N."/>
            <person name="Piazza S."/>
            <person name="Reed J."/>
            <person name="Reid J.F."/>
            <person name="Ring B.Z."/>
            <person name="Ringwald M."/>
            <person name="Rost B."/>
            <person name="Ruan Y."/>
            <person name="Salzberg S.L."/>
            <person name="Sandelin A."/>
            <person name="Schneider C."/>
            <person name="Schoenbach C."/>
            <person name="Sekiguchi K."/>
            <person name="Semple C.A."/>
            <person name="Seno S."/>
            <person name="Sessa L."/>
            <person name="Sheng Y."/>
            <person name="Shibata Y."/>
            <person name="Shimada H."/>
            <person name="Shimada K."/>
            <person name="Silva D."/>
            <person name="Sinclair B."/>
            <person name="Sperling S."/>
            <person name="Stupka E."/>
            <person name="Sugiura K."/>
            <person name="Sultana R."/>
            <person name="Takenaka Y."/>
            <person name="Taki K."/>
            <person name="Tammoja K."/>
            <person name="Tan S.L."/>
            <person name="Tang S."/>
            <person name="Taylor M.S."/>
            <person name="Tegner J."/>
            <person name="Teichmann S.A."/>
            <person name="Ueda H.R."/>
            <person name="van Nimwegen E."/>
            <person name="Verardo R."/>
            <person name="Wei C.L."/>
            <person name="Yagi K."/>
            <person name="Yamanishi H."/>
            <person name="Zabarovsky E."/>
            <person name="Zhu S."/>
            <person name="Zimmer A."/>
            <person name="Hide W."/>
            <person name="Bult C."/>
            <person name="Grimmond S.M."/>
            <person name="Teasdale R.D."/>
            <person name="Liu E.T."/>
            <person name="Brusic V."/>
            <person name="Quackenbush J."/>
            <person name="Wahlestedt C."/>
            <person name="Mattick J.S."/>
            <person name="Hume D.A."/>
            <person name="Kai C."/>
            <person name="Sasaki D."/>
            <person name="Tomaru Y."/>
            <person name="Fukuda S."/>
            <person name="Kanamori-Katayama M."/>
            <person name="Suzuki M."/>
            <person name="Aoki J."/>
            <person name="Arakawa T."/>
            <person name="Iida J."/>
            <person name="Imamura K."/>
            <person name="Itoh M."/>
            <person name="Kato T."/>
            <person name="Kawaji H."/>
            <person name="Kawagashira N."/>
            <person name="Kawashima T."/>
            <person name="Kojima M."/>
            <person name="Kondo S."/>
            <person name="Konno H."/>
            <person name="Nakano K."/>
            <person name="Ninomiya N."/>
            <person name="Nishio T."/>
            <person name="Okada M."/>
            <person name="Plessy C."/>
            <person name="Shibata K."/>
            <person name="Shiraki T."/>
            <person name="Suzuki S."/>
            <person name="Tagami M."/>
            <person name="Waki K."/>
            <person name="Watahiki A."/>
            <person name="Okamura-Oho Y."/>
            <person name="Suzuki H."/>
            <person name="Kawai J."/>
            <person name="Hayashizaki Y."/>
        </authorList>
    </citation>
    <scope>NUCLEOTIDE SEQUENCE [LARGE SCALE MRNA] (ISOFORMS 1 AND 2)</scope>
    <source>
        <strain>C57BL/6J</strain>
        <strain>NOD</strain>
        <tissue>Pancreas</tissue>
        <tissue>Spleen</tissue>
    </source>
</reference>
<reference key="3">
    <citation type="journal article" date="2004" name="Genome Res.">
        <title>The status, quality, and expansion of the NIH full-length cDNA project: the Mammalian Gene Collection (MGC).</title>
        <authorList>
            <consortium name="The MGC Project Team"/>
        </authorList>
    </citation>
    <scope>NUCLEOTIDE SEQUENCE [LARGE SCALE MRNA] OF 2-228 (ISOFORM 1)</scope>
    <source>
        <tissue>Mammary tumor</tissue>
    </source>
</reference>
<reference key="4">
    <citation type="journal article" date="2004" name="Nature">
        <title>A membrane protein required for dislocation of misfolded proteins from the ER.</title>
        <authorList>
            <person name="Lilley B.N."/>
            <person name="Ploegh H.L."/>
        </authorList>
    </citation>
    <scope>IDENTIFICATION</scope>
</reference>
<reference key="5">
    <citation type="journal article" date="2010" name="Cell">
        <title>A tissue-specific atlas of mouse protein phosphorylation and expression.</title>
        <authorList>
            <person name="Huttlin E.L."/>
            <person name="Jedrychowski M.P."/>
            <person name="Elias J.E."/>
            <person name="Goswami T."/>
            <person name="Rad R."/>
            <person name="Beausoleil S.A."/>
            <person name="Villen J."/>
            <person name="Haas W."/>
            <person name="Sowa M.E."/>
            <person name="Gygi S.P."/>
        </authorList>
    </citation>
    <scope>IDENTIFICATION BY MASS SPECTROMETRY [LARGE SCALE ANALYSIS]</scope>
    <source>
        <tissue>Pancreas</tissue>
    </source>
</reference>
<reference key="6">
    <citation type="journal article" date="2011" name="J. Biol. Chem.">
        <title>Selenoprotein K binds multiprotein complexes and is involved in the regulation of endoplasmic reticulum homeostasis.</title>
        <authorList>
            <person name="Shchedrina V.A."/>
            <person name="Everley R.A."/>
            <person name="Zhang Y."/>
            <person name="Gygi S.P."/>
            <person name="Hatfield D.L."/>
            <person name="Gladyshev V.N."/>
        </authorList>
    </citation>
    <scope>INTERACTION WITH SELENOK AND SELENOS</scope>
</reference>
<organism>
    <name type="scientific">Mus musculus</name>
    <name type="common">Mouse</name>
    <dbReference type="NCBI Taxonomy" id="10090"/>
    <lineage>
        <taxon>Eukaryota</taxon>
        <taxon>Metazoa</taxon>
        <taxon>Chordata</taxon>
        <taxon>Craniata</taxon>
        <taxon>Vertebrata</taxon>
        <taxon>Euteleostomi</taxon>
        <taxon>Mammalia</taxon>
        <taxon>Eutheria</taxon>
        <taxon>Euarchontoglires</taxon>
        <taxon>Glires</taxon>
        <taxon>Rodentia</taxon>
        <taxon>Myomorpha</taxon>
        <taxon>Muroidea</taxon>
        <taxon>Muridae</taxon>
        <taxon>Murinae</taxon>
        <taxon>Mus</taxon>
        <taxon>Mus</taxon>
    </lineage>
</organism>
<feature type="chain" id="PRO_0000219049" description="Derlin-3">
    <location>
        <begin position="1"/>
        <end position="228"/>
    </location>
</feature>
<feature type="topological domain" description="Cytoplasmic" evidence="2">
    <location>
        <begin position="1"/>
        <end position="22"/>
    </location>
</feature>
<feature type="transmembrane region" description="Helical; Name=1" evidence="2">
    <location>
        <begin position="23"/>
        <end position="43"/>
    </location>
</feature>
<feature type="topological domain" description="Lumenal" evidence="2">
    <location>
        <begin position="44"/>
        <end position="57"/>
    </location>
</feature>
<feature type="transmembrane region" description="Helical; Name=2" evidence="2">
    <location>
        <begin position="58"/>
        <end position="78"/>
    </location>
</feature>
<feature type="topological domain" description="Cytoplasmic" evidence="2">
    <location>
        <begin position="79"/>
        <end position="98"/>
    </location>
</feature>
<feature type="transmembrane region" description="Helical; Name=3" evidence="2">
    <location>
        <begin position="99"/>
        <end position="119"/>
    </location>
</feature>
<feature type="topological domain" description="Lumenal" evidence="2">
    <location>
        <begin position="120"/>
        <end position="168"/>
    </location>
</feature>
<feature type="transmembrane region" description="Helical; Name=4" evidence="2">
    <location>
        <begin position="169"/>
        <end position="189"/>
    </location>
</feature>
<feature type="topological domain" description="Cytoplasmic" evidence="2">
    <location>
        <begin position="190"/>
        <end position="228"/>
    </location>
</feature>
<feature type="splice variant" id="VSP_011090" description="In isoform 2." evidence="7">
    <location>
        <begin position="110"/>
        <end position="150"/>
    </location>
</feature>
<feature type="sequence conflict" description="In Ref. 3; AAH04729." evidence="8" ref="3">
    <original>A</original>
    <variation>T</variation>
    <location>
        <position position="15"/>
    </location>
</feature>